<proteinExistence type="evidence at transcript level"/>
<protein>
    <recommendedName>
        <fullName>Tetraspanin-15</fullName>
    </recommendedName>
</protein>
<dbReference type="EMBL" id="AB013396">
    <property type="protein sequence ID" value="BAB08851.1"/>
    <property type="status" value="ALT_INIT"/>
    <property type="molecule type" value="Genomic_DNA"/>
</dbReference>
<dbReference type="EMBL" id="CP002688">
    <property type="protein sequence ID" value="AED96954.1"/>
    <property type="molecule type" value="Genomic_DNA"/>
</dbReference>
<dbReference type="EMBL" id="DQ447087">
    <property type="protein sequence ID" value="ABE66257.1"/>
    <property type="molecule type" value="mRNA"/>
</dbReference>
<dbReference type="EMBL" id="DQ653378">
    <property type="protein sequence ID" value="ABK28764.1"/>
    <property type="status" value="ALT_SEQ"/>
    <property type="molecule type" value="mRNA"/>
</dbReference>
<dbReference type="EMBL" id="AY086342">
    <property type="protein sequence ID" value="AAM64410.1"/>
    <property type="molecule type" value="mRNA"/>
</dbReference>
<dbReference type="RefSeq" id="NP_568866.1">
    <property type="nucleotide sequence ID" value="NM_125165.3"/>
</dbReference>
<dbReference type="SMR" id="Q1PDI1"/>
<dbReference type="BioGRID" id="21134">
    <property type="interactions" value="7"/>
</dbReference>
<dbReference type="FunCoup" id="Q1PDI1">
    <property type="interactions" value="94"/>
</dbReference>
<dbReference type="IntAct" id="Q1PDI1">
    <property type="interactions" value="6"/>
</dbReference>
<dbReference type="STRING" id="3702.Q1PDI1"/>
<dbReference type="TCDB" id="8.A.40.6.2">
    <property type="family name" value="the tetraspanin (tetraspanin) family"/>
</dbReference>
<dbReference type="GlyCosmos" id="Q1PDI1">
    <property type="glycosylation" value="1 site, No reported glycans"/>
</dbReference>
<dbReference type="GlyGen" id="Q1PDI1">
    <property type="glycosylation" value="1 site"/>
</dbReference>
<dbReference type="PaxDb" id="3702-AT5G57810.1"/>
<dbReference type="ProteomicsDB" id="226602"/>
<dbReference type="EnsemblPlants" id="AT5G57810.1">
    <property type="protein sequence ID" value="AT5G57810.1"/>
    <property type="gene ID" value="AT5G57810"/>
</dbReference>
<dbReference type="GeneID" id="835890"/>
<dbReference type="Gramene" id="AT5G57810.1">
    <property type="protein sequence ID" value="AT5G57810.1"/>
    <property type="gene ID" value="AT5G57810"/>
</dbReference>
<dbReference type="KEGG" id="ath:AT5G57810"/>
<dbReference type="Araport" id="AT5G57810"/>
<dbReference type="TAIR" id="AT5G57810">
    <property type="gene designation" value="TET15"/>
</dbReference>
<dbReference type="eggNOG" id="ENOG502RVM0">
    <property type="taxonomic scope" value="Eukaryota"/>
</dbReference>
<dbReference type="HOGENOM" id="CLU_066970_0_0_1"/>
<dbReference type="InParanoid" id="Q1PDI1"/>
<dbReference type="OMA" id="DWSILCY"/>
<dbReference type="OrthoDB" id="761290at2759"/>
<dbReference type="PhylomeDB" id="Q1PDI1"/>
<dbReference type="PRO" id="PR:Q1PDI1"/>
<dbReference type="Proteomes" id="UP000006548">
    <property type="component" value="Chromosome 5"/>
</dbReference>
<dbReference type="ExpressionAtlas" id="Q1PDI1">
    <property type="expression patterns" value="baseline and differential"/>
</dbReference>
<dbReference type="GO" id="GO:0016020">
    <property type="term" value="C:membrane"/>
    <property type="evidence" value="ECO:0007669"/>
    <property type="project" value="UniProtKB-SubCell"/>
</dbReference>
<dbReference type="GO" id="GO:0009734">
    <property type="term" value="P:auxin-activated signaling pathway"/>
    <property type="evidence" value="ECO:0007669"/>
    <property type="project" value="InterPro"/>
</dbReference>
<dbReference type="InterPro" id="IPR044991">
    <property type="entry name" value="TET_plant"/>
</dbReference>
<dbReference type="InterPro" id="IPR018499">
    <property type="entry name" value="Tetraspanin/Peripherin"/>
</dbReference>
<dbReference type="PANTHER" id="PTHR32191">
    <property type="entry name" value="TETRASPANIN-8-RELATED"/>
    <property type="match status" value="1"/>
</dbReference>
<dbReference type="Pfam" id="PF00335">
    <property type="entry name" value="Tetraspanin"/>
    <property type="match status" value="1"/>
</dbReference>
<reference key="1">
    <citation type="journal article" date="1998" name="DNA Res.">
        <title>Structural analysis of Arabidopsis thaliana chromosome 5. VI. Sequence features of the regions of 1,367,185 bp covered by 19 physically assigned P1 and TAC clones.</title>
        <authorList>
            <person name="Kotani H."/>
            <person name="Nakamura Y."/>
            <person name="Sato S."/>
            <person name="Asamizu E."/>
            <person name="Kaneko T."/>
            <person name="Miyajima N."/>
            <person name="Tabata S."/>
        </authorList>
    </citation>
    <scope>NUCLEOTIDE SEQUENCE [LARGE SCALE GENOMIC DNA]</scope>
    <source>
        <strain>cv. Columbia</strain>
    </source>
</reference>
<reference key="2">
    <citation type="journal article" date="2017" name="Plant J.">
        <title>Araport11: a complete reannotation of the Arabidopsis thaliana reference genome.</title>
        <authorList>
            <person name="Cheng C.Y."/>
            <person name="Krishnakumar V."/>
            <person name="Chan A.P."/>
            <person name="Thibaud-Nissen F."/>
            <person name="Schobel S."/>
            <person name="Town C.D."/>
        </authorList>
    </citation>
    <scope>GENOME REANNOTATION</scope>
    <source>
        <strain>cv. Columbia</strain>
    </source>
</reference>
<reference key="3">
    <citation type="journal article" date="2006" name="Plant Biotechnol. J.">
        <title>Simultaneous high-throughput recombinational cloning of open reading frames in closed and open configurations.</title>
        <authorList>
            <person name="Underwood B.A."/>
            <person name="Vanderhaeghen R."/>
            <person name="Whitford R."/>
            <person name="Town C.D."/>
            <person name="Hilson P."/>
        </authorList>
    </citation>
    <scope>NUCLEOTIDE SEQUENCE [LARGE SCALE MRNA]</scope>
    <source>
        <strain>cv. Columbia</strain>
    </source>
</reference>
<reference key="4">
    <citation type="submission" date="2002-03" db="EMBL/GenBank/DDBJ databases">
        <title>Full-length cDNA from Arabidopsis thaliana.</title>
        <authorList>
            <person name="Brover V.V."/>
            <person name="Troukhan M.E."/>
            <person name="Alexandrov N.A."/>
            <person name="Lu Y.-P."/>
            <person name="Flavell R.B."/>
            <person name="Feldmann K.A."/>
        </authorList>
    </citation>
    <scope>NUCLEOTIDE SEQUENCE [LARGE SCALE MRNA]</scope>
</reference>
<keyword id="KW-0325">Glycoprotein</keyword>
<keyword id="KW-0472">Membrane</keyword>
<keyword id="KW-1185">Reference proteome</keyword>
<keyword id="KW-0812">Transmembrane</keyword>
<keyword id="KW-1133">Transmembrane helix</keyword>
<accession>Q1PDI1</accession>
<accession>A0MFQ2</accession>
<accession>Q8LCX7</accession>
<accession>Q9FJN3</accession>
<comment type="function">
    <text evidence="1">May be involved in the regulation of cell differentiation.</text>
</comment>
<comment type="subcellular location">
    <subcellularLocation>
        <location evidence="1">Membrane</location>
        <topology evidence="4">Multi-pass membrane protein</topology>
    </subcellularLocation>
</comment>
<comment type="similarity">
    <text evidence="4">Belongs to the tetraspanin (TM4SF) family.</text>
</comment>
<comment type="sequence caution" evidence="4">
    <conflict type="erroneous termination">
        <sequence resource="EMBL-CDS" id="ABK28764"/>
    </conflict>
    <text>Extended C-terminus.</text>
</comment>
<comment type="sequence caution" evidence="4">
    <conflict type="erroneous initiation">
        <sequence resource="EMBL-CDS" id="BAB08851"/>
    </conflict>
    <text>Truncated N-terminus.</text>
</comment>
<sequence>MADNAQVVPVEEPAATATATATATATTEPEAKSSDQMESQSDNKPPMGTLMALVNILAAGVLPIFTFVLSLTLLGYAVWLLYMRSYDCEDILGLPRVQTLASVGLLAVFVVSNAALFLRRKFPMPALVVMVVVLLLMLFIGLAYAGVNEMQSRRFPATRMWFKLKIMDDHVTWNNIKSCVYDKGACNDLIYGSPNEKPYNRRKMPPIKNGCCMPPETCNMDAINATFWYRRKDEGPPSSMNLMYGDEMMVGRISDCQLWRNDWSILCYDCRSCKFGFIRSVRRKWWQLGIFLIVISILLLMSHLLIFLATFWERFKG</sequence>
<name>TET15_ARATH</name>
<gene>
    <name type="primary">TET15</name>
    <name type="ordered locus">At5g57810</name>
    <name type="ORF">MTI20.4</name>
</gene>
<organism>
    <name type="scientific">Arabidopsis thaliana</name>
    <name type="common">Mouse-ear cress</name>
    <dbReference type="NCBI Taxonomy" id="3702"/>
    <lineage>
        <taxon>Eukaryota</taxon>
        <taxon>Viridiplantae</taxon>
        <taxon>Streptophyta</taxon>
        <taxon>Embryophyta</taxon>
        <taxon>Tracheophyta</taxon>
        <taxon>Spermatophyta</taxon>
        <taxon>Magnoliopsida</taxon>
        <taxon>eudicotyledons</taxon>
        <taxon>Gunneridae</taxon>
        <taxon>Pentapetalae</taxon>
        <taxon>rosids</taxon>
        <taxon>malvids</taxon>
        <taxon>Brassicales</taxon>
        <taxon>Brassicaceae</taxon>
        <taxon>Camelineae</taxon>
        <taxon>Arabidopsis</taxon>
    </lineage>
</organism>
<evidence type="ECO:0000250" key="1"/>
<evidence type="ECO:0000255" key="2"/>
<evidence type="ECO:0000256" key="3">
    <source>
        <dbReference type="SAM" id="MobiDB-lite"/>
    </source>
</evidence>
<evidence type="ECO:0000305" key="4"/>
<feature type="chain" id="PRO_0000421055" description="Tetraspanin-15">
    <location>
        <begin position="1"/>
        <end position="317"/>
    </location>
</feature>
<feature type="topological domain" description="Cytoplasmic" evidence="2">
    <location>
        <begin position="1"/>
        <end position="60"/>
    </location>
</feature>
<feature type="transmembrane region" description="Helical" evidence="2">
    <location>
        <begin position="61"/>
        <end position="81"/>
    </location>
</feature>
<feature type="topological domain" description="Extracellular" evidence="2">
    <location>
        <begin position="82"/>
        <end position="96"/>
    </location>
</feature>
<feature type="transmembrane region" description="Helical" evidence="2">
    <location>
        <begin position="97"/>
        <end position="117"/>
    </location>
</feature>
<feature type="topological domain" description="Cytoplasmic" evidence="2">
    <location>
        <begin position="118"/>
        <end position="126"/>
    </location>
</feature>
<feature type="transmembrane region" description="Helical" evidence="2">
    <location>
        <begin position="127"/>
        <end position="147"/>
    </location>
</feature>
<feature type="topological domain" description="Extracellular" evidence="2">
    <location>
        <begin position="148"/>
        <end position="287"/>
    </location>
</feature>
<feature type="transmembrane region" description="Helical" evidence="2">
    <location>
        <begin position="288"/>
        <end position="308"/>
    </location>
</feature>
<feature type="topological domain" description="Cytoplasmic" evidence="2">
    <location>
        <begin position="309"/>
        <end position="317"/>
    </location>
</feature>
<feature type="region of interest" description="Disordered" evidence="3">
    <location>
        <begin position="1"/>
        <end position="43"/>
    </location>
</feature>
<feature type="compositionally biased region" description="Low complexity" evidence="3">
    <location>
        <begin position="7"/>
        <end position="28"/>
    </location>
</feature>
<feature type="glycosylation site" description="N-linked (GlcNAc...) asparagine" evidence="2">
    <location>
        <position position="224"/>
    </location>
</feature>
<feature type="sequence conflict" description="In Ref. 4; AAM64410." evidence="4" ref="4">
    <original>Y</original>
    <variation>N</variation>
    <location>
        <position position="268"/>
    </location>
</feature>